<organism>
    <name type="scientific">Arabidopsis thaliana</name>
    <name type="common">Mouse-ear cress</name>
    <dbReference type="NCBI Taxonomy" id="3702"/>
    <lineage>
        <taxon>Eukaryota</taxon>
        <taxon>Viridiplantae</taxon>
        <taxon>Streptophyta</taxon>
        <taxon>Embryophyta</taxon>
        <taxon>Tracheophyta</taxon>
        <taxon>Spermatophyta</taxon>
        <taxon>Magnoliopsida</taxon>
        <taxon>eudicotyledons</taxon>
        <taxon>Gunneridae</taxon>
        <taxon>Pentapetalae</taxon>
        <taxon>rosids</taxon>
        <taxon>malvids</taxon>
        <taxon>Brassicales</taxon>
        <taxon>Brassicaceae</taxon>
        <taxon>Camelineae</taxon>
        <taxon>Arabidopsis</taxon>
    </lineage>
</organism>
<comment type="function">
    <text evidence="4 5 6 7">Transcription factor involved in the regulation of root hair elongation (PubMed:20139979, PubMed:27251390, PubMed:27452638). Is sufficient to promote postmitotic cell growth in root-hair cells and is a direct transcriptional target of RHD6 and RSL1 (PubMed:20139979). Involved in the regulation of root hair elongation in response to low phosphate (PubMed:27251390, PubMed:29651114). Controls root hair cell growth by regulating the expression of genes encoding proteins involved in cell signaling, cell wall modification and secretion (PubMed:27452638).</text>
</comment>
<comment type="subunit">
    <text evidence="11">Homodimer.</text>
</comment>
<comment type="subcellular location">
    <subcellularLocation>
        <location evidence="1 4 5">Nucleus</location>
    </subcellularLocation>
</comment>
<comment type="tissue specificity">
    <text evidence="3 4">Expressed constitutively in roots, leaves, and flowers (PubMed:12679534). Expressed in root epidermal hair cells (PubMed:20139979).</text>
</comment>
<comment type="induction">
    <text evidence="5 7 8">Induced by jasmonate (JA) treatment (PubMed:31988260). Induced by low phosphate conditions (PubMed:27251390, PubMed:29651114).</text>
</comment>
<comment type="domain">
    <text evidence="5">D-box [RxxLxxxN] motif functions as a recognition motif for the ubiquitination machinery.</text>
</comment>
<comment type="PTM">
    <text evidence="5 12">Ubiquitinated (Probable). Ubiquitination leads to its subsequent degradation by the 26S proteasome (PubMed:27251390).</text>
</comment>
<comment type="disruption phenotype">
    <text evidence="4">Strong reduction in root hair number, density and length in seedlings.</text>
</comment>
<comment type="sequence caution" evidence="11">
    <conflict type="erroneous gene model prediction">
        <sequence resource="EMBL-CDS" id="AAF24948"/>
    </conflict>
</comment>
<gene>
    <name evidence="10" type="primary">RSL4</name>
    <name evidence="9" type="synonym">BHLH54</name>
    <name evidence="11" type="synonym">EN114</name>
    <name evidence="13" type="ordered locus">At1g27740</name>
    <name evidence="14" type="ORF">T22C5.19</name>
</gene>
<accession>Q8LEG1</accession>
<accession>A0A178WM21</accession>
<accession>C0SUX8</accession>
<accession>Q9SFY5</accession>
<evidence type="ECO:0000255" key="1">
    <source>
        <dbReference type="PROSITE-ProRule" id="PRU00981"/>
    </source>
</evidence>
<evidence type="ECO:0000256" key="2">
    <source>
        <dbReference type="SAM" id="MobiDB-lite"/>
    </source>
</evidence>
<evidence type="ECO:0000269" key="3">
    <source>
    </source>
</evidence>
<evidence type="ECO:0000269" key="4">
    <source>
    </source>
</evidence>
<evidence type="ECO:0000269" key="5">
    <source>
    </source>
</evidence>
<evidence type="ECO:0000269" key="6">
    <source>
    </source>
</evidence>
<evidence type="ECO:0000269" key="7">
    <source>
    </source>
</evidence>
<evidence type="ECO:0000269" key="8">
    <source>
    </source>
</evidence>
<evidence type="ECO:0000303" key="9">
    <source>
    </source>
</evidence>
<evidence type="ECO:0000303" key="10">
    <source>
    </source>
</evidence>
<evidence type="ECO:0000305" key="11"/>
<evidence type="ECO:0000305" key="12">
    <source>
    </source>
</evidence>
<evidence type="ECO:0000312" key="13">
    <source>
        <dbReference type="Araport" id="AT1G27740"/>
    </source>
</evidence>
<evidence type="ECO:0000312" key="14">
    <source>
        <dbReference type="EMBL" id="AAF24948.1"/>
    </source>
</evidence>
<feature type="chain" id="PRO_0000358751" description="Transcription factor RSL3">
    <location>
        <begin position="1"/>
        <end position="258"/>
    </location>
</feature>
<feature type="domain" description="bHLH" evidence="1">
    <location>
        <begin position="173"/>
        <end position="222"/>
    </location>
</feature>
<feature type="region of interest" description="Disordered" evidence="2">
    <location>
        <begin position="119"/>
        <end position="178"/>
    </location>
</feature>
<feature type="region of interest" description="Basic motif" evidence="1">
    <location>
        <begin position="173"/>
        <end position="186"/>
    </location>
</feature>
<feature type="region of interest" description="Helix-loop-helix motif" evidence="1">
    <location>
        <begin position="187"/>
        <end position="222"/>
    </location>
</feature>
<feature type="short sequence motif" description="D-box" evidence="5">
    <location>
        <begin position="98"/>
        <end position="105"/>
    </location>
</feature>
<feature type="compositionally biased region" description="Polar residues" evidence="2">
    <location>
        <begin position="130"/>
        <end position="152"/>
    </location>
</feature>
<feature type="mutagenesis site" description="Decreases degradation by the 26S proteasome and increases the lifetime of RSL4 protein; when associated with V-101." evidence="5">
    <original>R</original>
    <variation>G</variation>
    <location>
        <position position="98"/>
    </location>
</feature>
<feature type="mutagenesis site" description="Decreases degradation by the 26S proteasome and increases the lifetime of RSL4 protein; when associated with G-98." evidence="5">
    <original>L</original>
    <variation>V</variation>
    <location>
        <position position="101"/>
    </location>
</feature>
<protein>
    <recommendedName>
        <fullName evidence="11">Transcription factor RSL3</fullName>
    </recommendedName>
    <alternativeName>
        <fullName evidence="9">Basic helix-loop-helix protein 54</fullName>
        <shortName evidence="9">AtbHLH54</shortName>
        <shortName evidence="9">bHLH 54</shortName>
    </alternativeName>
    <alternativeName>
        <fullName evidence="10">ROOT HAIR DEFECTIVE 6-LIKE 4</fullName>
        <shortName evidence="10">Protein RHD SIX-LIKE 4</shortName>
    </alternativeName>
    <alternativeName>
        <fullName evidence="11">Transcription factor EN 114</fullName>
    </alternativeName>
    <alternativeName>
        <fullName evidence="11">Transcription factor bHLH54</fullName>
    </alternativeName>
    <alternativeName>
        <fullName evidence="9">bHLH transcription factor bHLH054</fullName>
    </alternativeName>
</protein>
<keyword id="KW-0238">DNA-binding</keyword>
<keyword id="KW-0539">Nucleus</keyword>
<keyword id="KW-1185">Reference proteome</keyword>
<keyword id="KW-0804">Transcription</keyword>
<keyword id="KW-0805">Transcription regulation</keyword>
<keyword id="KW-0832">Ubl conjugation</keyword>
<reference key="1">
    <citation type="submission" date="2009-03" db="EMBL/GenBank/DDBJ databases">
        <title>ORF cloning and analysis of Arabidopsis transcription factor genes.</title>
        <authorList>
            <person name="Fujita M."/>
        </authorList>
    </citation>
    <scope>NUCLEOTIDE SEQUENCE [MRNA]</scope>
</reference>
<reference key="2">
    <citation type="journal article" date="2000" name="Nature">
        <title>Sequence and analysis of chromosome 1 of the plant Arabidopsis thaliana.</title>
        <authorList>
            <person name="Theologis A."/>
            <person name="Ecker J.R."/>
            <person name="Palm C.J."/>
            <person name="Federspiel N.A."/>
            <person name="Kaul S."/>
            <person name="White O."/>
            <person name="Alonso J."/>
            <person name="Altafi H."/>
            <person name="Araujo R."/>
            <person name="Bowman C.L."/>
            <person name="Brooks S.Y."/>
            <person name="Buehler E."/>
            <person name="Chan A."/>
            <person name="Chao Q."/>
            <person name="Chen H."/>
            <person name="Cheuk R.F."/>
            <person name="Chin C.W."/>
            <person name="Chung M.K."/>
            <person name="Conn L."/>
            <person name="Conway A.B."/>
            <person name="Conway A.R."/>
            <person name="Creasy T.H."/>
            <person name="Dewar K."/>
            <person name="Dunn P."/>
            <person name="Etgu P."/>
            <person name="Feldblyum T.V."/>
            <person name="Feng J.-D."/>
            <person name="Fong B."/>
            <person name="Fujii C.Y."/>
            <person name="Gill J.E."/>
            <person name="Goldsmith A.D."/>
            <person name="Haas B."/>
            <person name="Hansen N.F."/>
            <person name="Hughes B."/>
            <person name="Huizar L."/>
            <person name="Hunter J.L."/>
            <person name="Jenkins J."/>
            <person name="Johnson-Hopson C."/>
            <person name="Khan S."/>
            <person name="Khaykin E."/>
            <person name="Kim C.J."/>
            <person name="Koo H.L."/>
            <person name="Kremenetskaia I."/>
            <person name="Kurtz D.B."/>
            <person name="Kwan A."/>
            <person name="Lam B."/>
            <person name="Langin-Hooper S."/>
            <person name="Lee A."/>
            <person name="Lee J.M."/>
            <person name="Lenz C.A."/>
            <person name="Li J.H."/>
            <person name="Li Y.-P."/>
            <person name="Lin X."/>
            <person name="Liu S.X."/>
            <person name="Liu Z.A."/>
            <person name="Luros J.S."/>
            <person name="Maiti R."/>
            <person name="Marziali A."/>
            <person name="Militscher J."/>
            <person name="Miranda M."/>
            <person name="Nguyen M."/>
            <person name="Nierman W.C."/>
            <person name="Osborne B.I."/>
            <person name="Pai G."/>
            <person name="Peterson J."/>
            <person name="Pham P.K."/>
            <person name="Rizzo M."/>
            <person name="Rooney T."/>
            <person name="Rowley D."/>
            <person name="Sakano H."/>
            <person name="Salzberg S.L."/>
            <person name="Schwartz J.R."/>
            <person name="Shinn P."/>
            <person name="Southwick A.M."/>
            <person name="Sun H."/>
            <person name="Tallon L.J."/>
            <person name="Tambunga G."/>
            <person name="Toriumi M.J."/>
            <person name="Town C.D."/>
            <person name="Utterback T."/>
            <person name="Van Aken S."/>
            <person name="Vaysberg M."/>
            <person name="Vysotskaia V.S."/>
            <person name="Walker M."/>
            <person name="Wu D."/>
            <person name="Yu G."/>
            <person name="Fraser C.M."/>
            <person name="Venter J.C."/>
            <person name="Davis R.W."/>
        </authorList>
    </citation>
    <scope>NUCLEOTIDE SEQUENCE [LARGE SCALE GENOMIC DNA]</scope>
    <source>
        <strain>cv. Columbia</strain>
    </source>
</reference>
<reference key="3">
    <citation type="journal article" date="2017" name="Plant J.">
        <title>Araport11: a complete reannotation of the Arabidopsis thaliana reference genome.</title>
        <authorList>
            <person name="Cheng C.Y."/>
            <person name="Krishnakumar V."/>
            <person name="Chan A.P."/>
            <person name="Thibaud-Nissen F."/>
            <person name="Schobel S."/>
            <person name="Town C.D."/>
        </authorList>
    </citation>
    <scope>GENOME REANNOTATION</scope>
    <source>
        <strain>cv. Columbia</strain>
    </source>
</reference>
<reference key="4">
    <citation type="submission" date="2002-03" db="EMBL/GenBank/DDBJ databases">
        <title>Full-length cDNA from Arabidopsis thaliana.</title>
        <authorList>
            <person name="Brover V.V."/>
            <person name="Troukhan M.E."/>
            <person name="Alexandrov N.A."/>
            <person name="Lu Y.-P."/>
            <person name="Flavell R.B."/>
            <person name="Feldmann K.A."/>
        </authorList>
    </citation>
    <scope>NUCLEOTIDE SEQUENCE [LARGE SCALE MRNA]</scope>
</reference>
<reference key="5">
    <citation type="journal article" date="2003" name="Mol. Biol. Evol.">
        <title>The basic helix-loop-helix transcription factor family in plants: a genome-wide study of protein structure and functional diversity.</title>
        <authorList>
            <person name="Heim M.A."/>
            <person name="Jakoby M."/>
            <person name="Werber M."/>
            <person name="Martin C."/>
            <person name="Weisshaar B."/>
            <person name="Bailey P.C."/>
        </authorList>
    </citation>
    <scope>TISSUE SPECIFICITY</scope>
    <scope>GENE FAMILY</scope>
    <scope>NOMENCLATURE</scope>
</reference>
<reference key="6">
    <citation type="journal article" date="2003" name="Plant Cell">
        <title>The Arabidopsis basic/helix-loop-helix transcription factor family.</title>
        <authorList>
            <person name="Toledo-Ortiz G."/>
            <person name="Huq E."/>
            <person name="Quail P.H."/>
        </authorList>
    </citation>
    <scope>GENE FAMILY</scope>
</reference>
<reference key="7">
    <citation type="journal article" date="2003" name="Plant Cell">
        <title>Update on the basic helix-loop-helix transcription factor gene family in Arabidopsis thaliana.</title>
        <authorList>
            <person name="Bailey P.C."/>
            <person name="Martin C."/>
            <person name="Toledo-Ortiz G."/>
            <person name="Quail P.H."/>
            <person name="Huq E."/>
            <person name="Heim M.A."/>
            <person name="Jakoby M."/>
            <person name="Werber M."/>
            <person name="Weisshaar B."/>
        </authorList>
    </citation>
    <scope>GENE FAMILY</scope>
    <scope>NOMENCLATURE</scope>
</reference>
<reference key="8">
    <citation type="journal article" date="2010" name="Nat. Genet.">
        <title>A basic helix-loop-helix transcription factor controls cell growth and size in root hairs.</title>
        <authorList>
            <person name="Yi K."/>
            <person name="Menand B."/>
            <person name="Bell E."/>
            <person name="Dolan L."/>
        </authorList>
    </citation>
    <scope>FUNCTION</scope>
    <scope>TISSUE SPECIFICITY</scope>
    <scope>DISRUPTION PHENOTYPE</scope>
</reference>
<reference key="9">
    <citation type="journal article" date="2015" name="Nat. Plants">
        <title>Intensity of a pulse of RSL4 transcription factor synthesis determines Arabidopsis root hair cell size.</title>
        <authorList>
            <person name="Datta S."/>
            <person name="Prescott H."/>
            <person name="Dolan L."/>
        </authorList>
    </citation>
    <scope>FUNCTION</scope>
    <scope>SUBCELLULAR LOCATION</scope>
    <scope>INDUCTION BY LOW PHOSPHATE</scope>
    <scope>D-BOX MOTIF</scope>
    <scope>UBIQUITINATION</scope>
    <scope>MUTAGENESIS OF ARG-98 AND LEU-101</scope>
</reference>
<reference key="10">
    <citation type="journal article" date="2016" name="New Phytol.">
        <title>ROOT HAIR DEFECTIVE SIX-LIKE4 (RSL4) promotes root hair elongation by transcriptionally regulating the expression of genes required for cell growth.</title>
        <authorList>
            <person name="Vijayakumar P."/>
            <person name="Datta S."/>
            <person name="Dolan L."/>
        </authorList>
    </citation>
    <scope>FUNCTION</scope>
</reference>
<reference key="11">
    <citation type="journal article" date="2018" name="Nat. Commun.">
        <title>A mechanistic framework for auxin dependent Arabidopsis root hair elongation to low external phosphate.</title>
        <authorList>
            <person name="Bhosale R."/>
            <person name="Giri J."/>
            <person name="Pandey B.K."/>
            <person name="Giehl R.F.H."/>
            <person name="Hartmann A."/>
            <person name="Traini R."/>
            <person name="Truskina J."/>
            <person name="Leftley N."/>
            <person name="Hanlon M."/>
            <person name="Swarup K."/>
            <person name="Rashed A."/>
            <person name="Voss U."/>
            <person name="Alonso J."/>
            <person name="Stepanova A."/>
            <person name="Yun J."/>
            <person name="Ljung K."/>
            <person name="Brown K.M."/>
            <person name="Lynch J.P."/>
            <person name="Dolan L."/>
            <person name="Vernoux T."/>
            <person name="Bishopp A."/>
            <person name="Wells D."/>
            <person name="von Wiren N."/>
            <person name="Bennett M.J."/>
            <person name="Swarup R."/>
        </authorList>
    </citation>
    <scope>FUNCTION</scope>
    <scope>INDUCTION BY LOW PHOSPHATE</scope>
</reference>
<reference key="12">
    <citation type="journal article" date="2020" name="Plant Cell">
        <title>Arabidopsis JAZ proteins interact with and suppress RHD6 transcription factor to regulate jasmonate-stimulated root hair development.</title>
        <authorList>
            <person name="Han X."/>
            <person name="Zhang M."/>
            <person name="Yang M."/>
            <person name="Hu Y."/>
        </authorList>
    </citation>
    <scope>INDUCTION BY JASMONATE</scope>
</reference>
<dbReference type="EMBL" id="AB493481">
    <property type="protein sequence ID" value="BAH30319.1"/>
    <property type="molecule type" value="mRNA"/>
</dbReference>
<dbReference type="EMBL" id="AC012375">
    <property type="protein sequence ID" value="AAF24948.1"/>
    <property type="status" value="ALT_SEQ"/>
    <property type="molecule type" value="Genomic_DNA"/>
</dbReference>
<dbReference type="EMBL" id="CP002684">
    <property type="protein sequence ID" value="AEE30871.1"/>
    <property type="molecule type" value="Genomic_DNA"/>
</dbReference>
<dbReference type="EMBL" id="AY085436">
    <property type="protein sequence ID" value="AAM62663.1"/>
    <property type="molecule type" value="mRNA"/>
</dbReference>
<dbReference type="PIR" id="B86402">
    <property type="entry name" value="B86402"/>
</dbReference>
<dbReference type="RefSeq" id="NP_564293.1">
    <property type="nucleotide sequence ID" value="NM_102539.3"/>
</dbReference>
<dbReference type="SMR" id="Q8LEG1"/>
<dbReference type="BioGRID" id="24902">
    <property type="interactions" value="3"/>
</dbReference>
<dbReference type="FunCoup" id="Q8LEG1">
    <property type="interactions" value="77"/>
</dbReference>
<dbReference type="IntAct" id="Q8LEG1">
    <property type="interactions" value="2"/>
</dbReference>
<dbReference type="STRING" id="3702.Q8LEG1"/>
<dbReference type="PaxDb" id="3702-AT1G27740.1"/>
<dbReference type="EnsemblPlants" id="AT1G27740.1">
    <property type="protein sequence ID" value="AT1G27740.1"/>
    <property type="gene ID" value="AT1G27740"/>
</dbReference>
<dbReference type="GeneID" id="839667"/>
<dbReference type="Gramene" id="AT1G27740.1">
    <property type="protein sequence ID" value="AT1G27740.1"/>
    <property type="gene ID" value="AT1G27740"/>
</dbReference>
<dbReference type="KEGG" id="ath:AT1G27740"/>
<dbReference type="Araport" id="AT1G27740"/>
<dbReference type="TAIR" id="AT1G27740">
    <property type="gene designation" value="RSL4"/>
</dbReference>
<dbReference type="eggNOG" id="ENOG502QWSN">
    <property type="taxonomic scope" value="Eukaryota"/>
</dbReference>
<dbReference type="HOGENOM" id="CLU_1241620_0_0_1"/>
<dbReference type="InParanoid" id="Q8LEG1"/>
<dbReference type="OMA" id="KTNSNCD"/>
<dbReference type="OrthoDB" id="651283at2759"/>
<dbReference type="PhylomeDB" id="Q8LEG1"/>
<dbReference type="PRO" id="PR:Q8LEG1"/>
<dbReference type="Proteomes" id="UP000006548">
    <property type="component" value="Chromosome 1"/>
</dbReference>
<dbReference type="ExpressionAtlas" id="Q8LEG1">
    <property type="expression patterns" value="baseline and differential"/>
</dbReference>
<dbReference type="GO" id="GO:0005634">
    <property type="term" value="C:nucleus"/>
    <property type="evidence" value="ECO:0007669"/>
    <property type="project" value="UniProtKB-SubCell"/>
</dbReference>
<dbReference type="GO" id="GO:0003677">
    <property type="term" value="F:DNA binding"/>
    <property type="evidence" value="ECO:0007669"/>
    <property type="project" value="UniProtKB-KW"/>
</dbReference>
<dbReference type="GO" id="GO:0003700">
    <property type="term" value="F:DNA-binding transcription factor activity"/>
    <property type="evidence" value="ECO:0000250"/>
    <property type="project" value="TAIR"/>
</dbReference>
<dbReference type="GO" id="GO:0046983">
    <property type="term" value="F:protein dimerization activity"/>
    <property type="evidence" value="ECO:0007669"/>
    <property type="project" value="InterPro"/>
</dbReference>
<dbReference type="GO" id="GO:0045893">
    <property type="term" value="P:positive regulation of DNA-templated transcription"/>
    <property type="evidence" value="ECO:0000315"/>
    <property type="project" value="TAIR"/>
</dbReference>
<dbReference type="GO" id="GO:0006355">
    <property type="term" value="P:regulation of DNA-templated transcription"/>
    <property type="evidence" value="ECO:0000304"/>
    <property type="project" value="TAIR"/>
</dbReference>
<dbReference type="GO" id="GO:0009733">
    <property type="term" value="P:response to auxin"/>
    <property type="evidence" value="ECO:0000270"/>
    <property type="project" value="TAIR"/>
</dbReference>
<dbReference type="GO" id="GO:0048766">
    <property type="term" value="P:root hair initiation"/>
    <property type="evidence" value="ECO:0000315"/>
    <property type="project" value="TAIR"/>
</dbReference>
<dbReference type="CDD" id="cd11454">
    <property type="entry name" value="bHLH_AtIND_like"/>
    <property type="match status" value="1"/>
</dbReference>
<dbReference type="FunFam" id="4.10.280.10:FF:000022">
    <property type="entry name" value="Basic helix-loop-helix transcription factor"/>
    <property type="match status" value="1"/>
</dbReference>
<dbReference type="Gene3D" id="4.10.280.10">
    <property type="entry name" value="Helix-loop-helix DNA-binding domain"/>
    <property type="match status" value="1"/>
</dbReference>
<dbReference type="InterPro" id="IPR011598">
    <property type="entry name" value="bHLH_dom"/>
</dbReference>
<dbReference type="InterPro" id="IPR036638">
    <property type="entry name" value="HLH_DNA-bd_sf"/>
</dbReference>
<dbReference type="InterPro" id="IPR045843">
    <property type="entry name" value="IND-like"/>
</dbReference>
<dbReference type="PANTHER" id="PTHR16223">
    <property type="entry name" value="TRANSCRIPTION FACTOR BHLH83-RELATED"/>
    <property type="match status" value="1"/>
</dbReference>
<dbReference type="PANTHER" id="PTHR16223:SF370">
    <property type="entry name" value="TRANSCRIPTION FACTOR RSL3-RELATED"/>
    <property type="match status" value="1"/>
</dbReference>
<dbReference type="Pfam" id="PF00010">
    <property type="entry name" value="HLH"/>
    <property type="match status" value="1"/>
</dbReference>
<dbReference type="SMART" id="SM00353">
    <property type="entry name" value="HLH"/>
    <property type="match status" value="1"/>
</dbReference>
<dbReference type="SUPFAM" id="SSF47459">
    <property type="entry name" value="HLH, helix-loop-helix DNA-binding domain"/>
    <property type="match status" value="1"/>
</dbReference>
<dbReference type="PROSITE" id="PS50888">
    <property type="entry name" value="BHLH"/>
    <property type="match status" value="1"/>
</dbReference>
<sequence>MDVFVDGELESLLGMFNFDQCSSSKEERPRDELLGLSSLYNGHLHQHQHHNNVLSSDHHAFLLPDMFPFGAMPGGNLPAMLDSWDQSHHLQETSSLKRKLLDVENLCKTNSNCDVTRQELAKSKKKQRVSSESNTVDESNTNWVDGQSLSNSSDDEKASVTSVKGKTRATKGTATDPQSLYARKRREKINERLKTLQNLVPNGTKVDISTMLEEAVHYVKFLQLQIKLLSSDDLWMYAPLAYNGLDMGFHHNLLSRLM</sequence>
<proteinExistence type="evidence at protein level"/>
<name>RSL4_ARATH</name>